<accession>M2YKT1</accession>
<reference key="1">
    <citation type="journal article" date="2012" name="PLoS Genet.">
        <title>The genomes of the fungal plant pathogens Cladosporium fulvum and Dothistroma septosporum reveal adaptation to different hosts and lifestyles but also signatures of common ancestry.</title>
        <authorList>
            <person name="de Wit P.J.G.M."/>
            <person name="van der Burgt A."/>
            <person name="Oekmen B."/>
            <person name="Stergiopoulos I."/>
            <person name="Abd-Elsalam K.A."/>
            <person name="Aerts A.L."/>
            <person name="Bahkali A.H."/>
            <person name="Beenen H.G."/>
            <person name="Chettri P."/>
            <person name="Cox M.P."/>
            <person name="Datema E."/>
            <person name="de Vries R.P."/>
            <person name="Dhillon B."/>
            <person name="Ganley A.R."/>
            <person name="Griffiths S.A."/>
            <person name="Guo Y."/>
            <person name="Hamelin R.C."/>
            <person name="Henrissat B."/>
            <person name="Kabir M.S."/>
            <person name="Jashni M.K."/>
            <person name="Kema G."/>
            <person name="Klaubauf S."/>
            <person name="Lapidus A."/>
            <person name="Levasseur A."/>
            <person name="Lindquist E."/>
            <person name="Mehrabi R."/>
            <person name="Ohm R.A."/>
            <person name="Owen T.J."/>
            <person name="Salamov A."/>
            <person name="Schwelm A."/>
            <person name="Schijlen E."/>
            <person name="Sun H."/>
            <person name="van den Burg H.A."/>
            <person name="van Ham R.C.H.J."/>
            <person name="Zhang S."/>
            <person name="Goodwin S.B."/>
            <person name="Grigoriev I.V."/>
            <person name="Collemare J."/>
            <person name="Bradshaw R.E."/>
        </authorList>
    </citation>
    <scope>NUCLEOTIDE SEQUENCE [LARGE SCALE GENOMIC DNA]</scope>
    <source>
        <strain>NZE10 / CBS 128990</strain>
    </source>
</reference>
<reference key="2">
    <citation type="journal article" date="2012" name="PLoS Pathog.">
        <title>Diverse lifestyles and strategies of plant pathogenesis encoded in the genomes of eighteen Dothideomycetes fungi.</title>
        <authorList>
            <person name="Ohm R.A."/>
            <person name="Feau N."/>
            <person name="Henrissat B."/>
            <person name="Schoch C.L."/>
            <person name="Horwitz B.A."/>
            <person name="Barry K.W."/>
            <person name="Condon B.J."/>
            <person name="Copeland A.C."/>
            <person name="Dhillon B."/>
            <person name="Glaser F."/>
            <person name="Hesse C.N."/>
            <person name="Kosti I."/>
            <person name="LaButti K."/>
            <person name="Lindquist E.A."/>
            <person name="Lucas S."/>
            <person name="Salamov A.A."/>
            <person name="Bradshaw R.E."/>
            <person name="Ciuffetti L."/>
            <person name="Hamelin R.C."/>
            <person name="Kema G.H.J."/>
            <person name="Lawrence C."/>
            <person name="Scott J.A."/>
            <person name="Spatafora J.W."/>
            <person name="Turgeon B.G."/>
            <person name="de Wit P.J.G.M."/>
            <person name="Zhong S."/>
            <person name="Goodwin S.B."/>
            <person name="Grigoriev I.V."/>
        </authorList>
    </citation>
    <scope>NUCLEOTIDE SEQUENCE [LARGE SCALE GENOMIC DNA]</scope>
    <source>
        <strain>NZE10 / CBS 128990</strain>
    </source>
</reference>
<reference key="3">
    <citation type="journal article" date="2019" name="Fungal Biol.">
        <title>Evolutionary relics dominate the small number of secondary metabolism genes in the hemibiotrophic fungus Dothistroma septosporum.</title>
        <authorList>
            <person name="Ozturk I.K."/>
            <person name="Dupont P.Y."/>
            <person name="Chettri P."/>
            <person name="McDougal R."/>
            <person name="Boehl O.J."/>
            <person name="Cox R.J."/>
            <person name="Bradshaw R.E."/>
        </authorList>
    </citation>
    <scope>FUNCTION</scope>
    <scope>PATHWAY</scope>
</reference>
<gene>
    <name type="ORF">DOTSEDRAFT_139328</name>
</gene>
<proteinExistence type="inferred from homology"/>
<name>MET1_DOTSN</name>
<protein>
    <recommendedName>
        <fullName evidence="4">Hps1-dma1 cluster O-methyltransferase</fullName>
        <ecNumber evidence="2">2.1.1.-</ecNumber>
    </recommendedName>
</protein>
<organism>
    <name type="scientific">Dothistroma septosporum (strain NZE10 / CBS 128990)</name>
    <name type="common">Red band needle blight fungus</name>
    <name type="synonym">Mycosphaerella pini</name>
    <dbReference type="NCBI Taxonomy" id="675120"/>
    <lineage>
        <taxon>Eukaryota</taxon>
        <taxon>Fungi</taxon>
        <taxon>Dikarya</taxon>
        <taxon>Ascomycota</taxon>
        <taxon>Pezizomycotina</taxon>
        <taxon>Dothideomycetes</taxon>
        <taxon>Dothideomycetidae</taxon>
        <taxon>Mycosphaerellales</taxon>
        <taxon>Mycosphaerellaceae</taxon>
        <taxon>Dothistroma</taxon>
    </lineage>
</organism>
<evidence type="ECO:0000250" key="1">
    <source>
        <dbReference type="UniProtKB" id="B6F209"/>
    </source>
</evidence>
<evidence type="ECO:0000255" key="2">
    <source>
        <dbReference type="PROSITE-ProRule" id="PRU01020"/>
    </source>
</evidence>
<evidence type="ECO:0000256" key="3">
    <source>
        <dbReference type="SAM" id="MobiDB-lite"/>
    </source>
</evidence>
<evidence type="ECO:0000303" key="4">
    <source>
    </source>
</evidence>
<evidence type="ECO:0000305" key="5"/>
<evidence type="ECO:0000305" key="6">
    <source>
    </source>
</evidence>
<sequence length="433" mass="48521">MGGSDHTKTSSQSTLRSLSDEISSLTDVVAGFLESNGHPERSLNSTDSVRLSDAPEDVEAARRRLVTALHEMTLLTMSPFEAVRDILLEVSSLPALHAISHFEIIDHVPLDGEISYAELARKINVPQRRLTRMLRAAMSRSIFQEPRPGYIAHNSLSAAMVHSKWLRYHAASTMENFLPAAPKFVEQIERFGDRETRCTSPAGIAFNTETDCIQYLLSQPKHQQVLVNLMKHTGEISGMGPQHLTEHYDWPKASDQIIVDVGGASGSVSRAIACGVPSVRFVVQDRADAVRQGESETPSELKDRFTFQEYDFFQTQPVKNADVYFLRWILHDWPDEDAVTILRQVALAMGPTSKMLIAERLVLLPGEGDPWDQKIATSMDMFMMAFNGSERTLEHFQSLIENTGEAIEISRVIRRPNGVQYSLIEVARKDSER</sequence>
<comment type="function">
    <text evidence="1 6">O-methyltransferase; part of the hps1-dma1 gene cluster that probably mediates the biosynthesis a derivative of cyclopiazonic acid (CPA) (Probable). The hybrid polyketide synthase-nonribosomal peptide synthetase (PKS-NRPS) nps1 might incorporates acetyl-CoA, malonyl-CoA, and tryptophan (Trp) and utilizes a C-terminal redox-incompetent reductase domain to make and release the tryptophan tetramic acid, cyclo-acetoacetyl-L-tryptophan (c-AATrp), as the first intermediate in the pathway (By similarity). In addition, the cluster also includes the tryptophan dimethylallyltransferase dma1, the FAD-dependent oxidoreductase toxD, the cytochrome P450 monooxygenase cyp3.1 and the methyltransferase DOTSEDRAFT_139328; the latter 2 being not present in all CPA-producing fungi but involved in additional modifications that occur in biosynthesis the of a range of CPA and CPA-like products (Probable). Further studies are required to clarify whether the CPA-like hps1-dma1 cluster is functional or a non-functional relic reflecting evolution of D.septosporum (Probable).</text>
</comment>
<comment type="pathway">
    <text evidence="6">Secondary metabolite biosynthesis.</text>
</comment>
<comment type="similarity">
    <text evidence="5">Belongs to the class I-like SAM-binding methyltransferase superfamily. Cation-independent O-methyltransferase family. COMT subfamily.</text>
</comment>
<feature type="chain" id="PRO_0000447731" description="Hps1-dma1 cluster O-methyltransferase">
    <location>
        <begin position="1"/>
        <end position="433"/>
    </location>
</feature>
<feature type="region of interest" description="Disordered" evidence="3">
    <location>
        <begin position="36"/>
        <end position="55"/>
    </location>
</feature>
<feature type="active site" description="Proton acceptor" evidence="2">
    <location>
        <position position="331"/>
    </location>
</feature>
<feature type="binding site" evidence="2">
    <location>
        <position position="285"/>
    </location>
    <ligand>
        <name>S-adenosyl-L-methionine</name>
        <dbReference type="ChEBI" id="CHEBI:59789"/>
    </ligand>
</feature>
<keyword id="KW-0489">Methyltransferase</keyword>
<keyword id="KW-1185">Reference proteome</keyword>
<keyword id="KW-0949">S-adenosyl-L-methionine</keyword>
<keyword id="KW-0808">Transferase</keyword>
<dbReference type="EC" id="2.1.1.-" evidence="2"/>
<dbReference type="EMBL" id="KB446545">
    <property type="protein sequence ID" value="EME39475.1"/>
    <property type="molecule type" value="Genomic_DNA"/>
</dbReference>
<dbReference type="SMR" id="M2YKT1"/>
<dbReference type="STRING" id="675120.M2YKT1"/>
<dbReference type="EnsemblFungi" id="EME39475">
    <property type="protein sequence ID" value="EME39475"/>
    <property type="gene ID" value="DOTSEDRAFT_139328"/>
</dbReference>
<dbReference type="eggNOG" id="KOG3178">
    <property type="taxonomic scope" value="Eukaryota"/>
</dbReference>
<dbReference type="HOGENOM" id="CLU_005533_1_4_1"/>
<dbReference type="OMA" id="HTAMPDA"/>
<dbReference type="OrthoDB" id="1606438at2759"/>
<dbReference type="Proteomes" id="UP000016933">
    <property type="component" value="Unassembled WGS sequence"/>
</dbReference>
<dbReference type="GO" id="GO:0008171">
    <property type="term" value="F:O-methyltransferase activity"/>
    <property type="evidence" value="ECO:0007669"/>
    <property type="project" value="InterPro"/>
</dbReference>
<dbReference type="GO" id="GO:0032259">
    <property type="term" value="P:methylation"/>
    <property type="evidence" value="ECO:0007669"/>
    <property type="project" value="UniProtKB-KW"/>
</dbReference>
<dbReference type="GO" id="GO:0044550">
    <property type="term" value="P:secondary metabolite biosynthetic process"/>
    <property type="evidence" value="ECO:0007669"/>
    <property type="project" value="UniProtKB-ARBA"/>
</dbReference>
<dbReference type="Gene3D" id="3.40.50.150">
    <property type="entry name" value="Vaccinia Virus protein VP39"/>
    <property type="match status" value="1"/>
</dbReference>
<dbReference type="Gene3D" id="1.10.10.10">
    <property type="entry name" value="Winged helix-like DNA-binding domain superfamily/Winged helix DNA-binding domain"/>
    <property type="match status" value="1"/>
</dbReference>
<dbReference type="InterPro" id="IPR016461">
    <property type="entry name" value="COMT-like"/>
</dbReference>
<dbReference type="InterPro" id="IPR001077">
    <property type="entry name" value="O_MeTrfase_dom"/>
</dbReference>
<dbReference type="InterPro" id="IPR029063">
    <property type="entry name" value="SAM-dependent_MTases_sf"/>
</dbReference>
<dbReference type="InterPro" id="IPR036388">
    <property type="entry name" value="WH-like_DNA-bd_sf"/>
</dbReference>
<dbReference type="InterPro" id="IPR036390">
    <property type="entry name" value="WH_DNA-bd_sf"/>
</dbReference>
<dbReference type="PANTHER" id="PTHR43712:SF5">
    <property type="entry name" value="O-METHYLTRANSFERASE ASQN-RELATED"/>
    <property type="match status" value="1"/>
</dbReference>
<dbReference type="PANTHER" id="PTHR43712">
    <property type="entry name" value="PUTATIVE (AFU_ORTHOLOGUE AFUA_4G14580)-RELATED"/>
    <property type="match status" value="1"/>
</dbReference>
<dbReference type="Pfam" id="PF00891">
    <property type="entry name" value="Methyltransf_2"/>
    <property type="match status" value="1"/>
</dbReference>
<dbReference type="SUPFAM" id="SSF53335">
    <property type="entry name" value="S-adenosyl-L-methionine-dependent methyltransferases"/>
    <property type="match status" value="1"/>
</dbReference>
<dbReference type="SUPFAM" id="SSF46785">
    <property type="entry name" value="Winged helix' DNA-binding domain"/>
    <property type="match status" value="1"/>
</dbReference>
<dbReference type="PROSITE" id="PS51683">
    <property type="entry name" value="SAM_OMT_II"/>
    <property type="match status" value="1"/>
</dbReference>